<feature type="transit peptide" description="Mitochondrion" evidence="4">
    <location>
        <begin position="1"/>
        <end position="35"/>
    </location>
</feature>
<feature type="chain" id="PRO_0000404547" description="GTPase Era, mitochondrial">
    <location>
        <begin position="36"/>
        <end position="461"/>
    </location>
</feature>
<feature type="domain" description="Era-type G" evidence="5">
    <location>
        <begin position="89"/>
        <end position="354"/>
    </location>
</feature>
<feature type="domain" description="KH type-2">
    <location>
        <begin position="380"/>
        <end position="461"/>
    </location>
</feature>
<feature type="region of interest" description="Disordered" evidence="6">
    <location>
        <begin position="39"/>
        <end position="73"/>
    </location>
</feature>
<feature type="region of interest" description="G1" evidence="5">
    <location>
        <begin position="97"/>
        <end position="104"/>
    </location>
</feature>
<feature type="region of interest" description="G2" evidence="5">
    <location>
        <begin position="123"/>
        <end position="127"/>
    </location>
</feature>
<feature type="region of interest" description="G3" evidence="5">
    <location>
        <begin position="144"/>
        <end position="147"/>
    </location>
</feature>
<feature type="region of interest" description="G4" evidence="5">
    <location>
        <begin position="213"/>
        <end position="216"/>
    </location>
</feature>
<feature type="region of interest" description="Disordered" evidence="6">
    <location>
        <begin position="260"/>
        <end position="319"/>
    </location>
</feature>
<feature type="region of interest" description="G5" evidence="5">
    <location>
        <begin position="332"/>
        <end position="334"/>
    </location>
</feature>
<feature type="compositionally biased region" description="Basic and acidic residues" evidence="6">
    <location>
        <begin position="269"/>
        <end position="284"/>
    </location>
</feature>
<feature type="compositionally biased region" description="Polar residues" evidence="6">
    <location>
        <begin position="285"/>
        <end position="303"/>
    </location>
</feature>
<feature type="compositionally biased region" description="Basic and acidic residues" evidence="6">
    <location>
        <begin position="304"/>
        <end position="319"/>
    </location>
</feature>
<feature type="binding site" evidence="3">
    <location>
        <begin position="97"/>
        <end position="104"/>
    </location>
    <ligand>
        <name>GTP</name>
        <dbReference type="ChEBI" id="CHEBI:37565"/>
    </ligand>
</feature>
<feature type="binding site" evidence="3">
    <location>
        <begin position="144"/>
        <end position="148"/>
    </location>
    <ligand>
        <name>GTP</name>
        <dbReference type="ChEBI" id="CHEBI:37565"/>
    </ligand>
</feature>
<feature type="binding site" evidence="3">
    <location>
        <begin position="213"/>
        <end position="216"/>
    </location>
    <ligand>
        <name>GTP</name>
        <dbReference type="ChEBI" id="CHEBI:37565"/>
    </ligand>
</feature>
<organism>
    <name type="scientific">Gallus gallus</name>
    <name type="common">Chicken</name>
    <dbReference type="NCBI Taxonomy" id="9031"/>
    <lineage>
        <taxon>Eukaryota</taxon>
        <taxon>Metazoa</taxon>
        <taxon>Chordata</taxon>
        <taxon>Craniata</taxon>
        <taxon>Vertebrata</taxon>
        <taxon>Euteleostomi</taxon>
        <taxon>Archelosauria</taxon>
        <taxon>Archosauria</taxon>
        <taxon>Dinosauria</taxon>
        <taxon>Saurischia</taxon>
        <taxon>Theropoda</taxon>
        <taxon>Coelurosauria</taxon>
        <taxon>Aves</taxon>
        <taxon>Neognathae</taxon>
        <taxon>Galloanserae</taxon>
        <taxon>Galliformes</taxon>
        <taxon>Phasianidae</taxon>
        <taxon>Phasianinae</taxon>
        <taxon>Gallus</taxon>
    </lineage>
</organism>
<proteinExistence type="evidence at protein level"/>
<accession>Q8JIF5</accession>
<reference key="1">
    <citation type="journal article" date="2003" name="Oncogene">
        <title>Elimination of the vertebrate Escherichia coli Ras-like protein homologue leads to cell cycle arrest at G1 phase and apoptosis.</title>
        <authorList>
            <person name="Gohda J."/>
            <person name="Nomura Y."/>
            <person name="Suzuki H."/>
            <person name="Arai H."/>
            <person name="Akiyama T."/>
            <person name="Inoue J."/>
        </authorList>
    </citation>
    <scope>NUCLEOTIDE SEQUENCE [MRNA]</scope>
    <scope>RNA-BINDING</scope>
</reference>
<dbReference type="EMBL" id="AB089163">
    <property type="protein sequence ID" value="BAC06859.1"/>
    <property type="molecule type" value="mRNA"/>
</dbReference>
<dbReference type="RefSeq" id="NP_989570.2">
    <property type="nucleotide sequence ID" value="NM_204239.2"/>
</dbReference>
<dbReference type="SMR" id="Q8JIF5"/>
<dbReference type="FunCoup" id="Q8JIF5">
    <property type="interactions" value="1692"/>
</dbReference>
<dbReference type="STRING" id="9031.ENSGALP00000058193"/>
<dbReference type="PaxDb" id="9031-ENSGALP00000006355"/>
<dbReference type="GeneID" id="374084"/>
<dbReference type="KEGG" id="gga:374084"/>
<dbReference type="CTD" id="26284"/>
<dbReference type="VEuPathDB" id="HostDB:geneid_374084"/>
<dbReference type="eggNOG" id="KOG1423">
    <property type="taxonomic scope" value="Eukaryota"/>
</dbReference>
<dbReference type="InParanoid" id="Q8JIF5"/>
<dbReference type="OrthoDB" id="8954335at2759"/>
<dbReference type="PhylomeDB" id="Q8JIF5"/>
<dbReference type="PRO" id="PR:Q8JIF5"/>
<dbReference type="Proteomes" id="UP000000539">
    <property type="component" value="Unassembled WGS sequence"/>
</dbReference>
<dbReference type="GO" id="GO:0005743">
    <property type="term" value="C:mitochondrial inner membrane"/>
    <property type="evidence" value="ECO:0007669"/>
    <property type="project" value="UniProtKB-SubCell"/>
</dbReference>
<dbReference type="GO" id="GO:0005759">
    <property type="term" value="C:mitochondrial matrix"/>
    <property type="evidence" value="ECO:0000250"/>
    <property type="project" value="UniProtKB"/>
</dbReference>
<dbReference type="GO" id="GO:0005525">
    <property type="term" value="F:GTP binding"/>
    <property type="evidence" value="ECO:0007669"/>
    <property type="project" value="UniProtKB-KW"/>
</dbReference>
<dbReference type="GO" id="GO:0043024">
    <property type="term" value="F:ribosomal small subunit binding"/>
    <property type="evidence" value="ECO:0000250"/>
    <property type="project" value="UniProtKB"/>
</dbReference>
<dbReference type="GO" id="GO:0019843">
    <property type="term" value="F:rRNA binding"/>
    <property type="evidence" value="ECO:0000250"/>
    <property type="project" value="UniProtKB"/>
</dbReference>
<dbReference type="GO" id="GO:0000028">
    <property type="term" value="P:ribosomal small subunit assembly"/>
    <property type="evidence" value="ECO:0000250"/>
    <property type="project" value="UniProtKB"/>
</dbReference>
<dbReference type="CDD" id="cd04163">
    <property type="entry name" value="Era"/>
    <property type="match status" value="1"/>
</dbReference>
<dbReference type="CDD" id="cd22534">
    <property type="entry name" value="KH-II_Era"/>
    <property type="match status" value="1"/>
</dbReference>
<dbReference type="FunFam" id="3.40.50.300:FF:002220">
    <property type="entry name" value="GTPase Era, mitochondrial"/>
    <property type="match status" value="1"/>
</dbReference>
<dbReference type="FunFam" id="3.30.300.20:FF:000016">
    <property type="entry name" value="GTPase Era, mitochondrial isoform 1"/>
    <property type="match status" value="1"/>
</dbReference>
<dbReference type="Gene3D" id="3.30.300.20">
    <property type="match status" value="1"/>
</dbReference>
<dbReference type="Gene3D" id="3.40.50.300">
    <property type="entry name" value="P-loop containing nucleotide triphosphate hydrolases"/>
    <property type="match status" value="1"/>
</dbReference>
<dbReference type="HAMAP" id="MF_00367">
    <property type="entry name" value="GTPase_Era"/>
    <property type="match status" value="1"/>
</dbReference>
<dbReference type="InterPro" id="IPR030388">
    <property type="entry name" value="G_ERA_dom"/>
</dbReference>
<dbReference type="InterPro" id="IPR006073">
    <property type="entry name" value="GTP-bd"/>
</dbReference>
<dbReference type="InterPro" id="IPR005662">
    <property type="entry name" value="GTPase_Era-like"/>
</dbReference>
<dbReference type="InterPro" id="IPR015946">
    <property type="entry name" value="KH_dom-like_a/b"/>
</dbReference>
<dbReference type="InterPro" id="IPR004044">
    <property type="entry name" value="KH_dom_type_2"/>
</dbReference>
<dbReference type="InterPro" id="IPR009019">
    <property type="entry name" value="KH_sf_prok-type"/>
</dbReference>
<dbReference type="InterPro" id="IPR027417">
    <property type="entry name" value="P-loop_NTPase"/>
</dbReference>
<dbReference type="InterPro" id="IPR005225">
    <property type="entry name" value="Small_GTP-bd"/>
</dbReference>
<dbReference type="NCBIfam" id="TIGR00231">
    <property type="entry name" value="small_GTP"/>
    <property type="match status" value="1"/>
</dbReference>
<dbReference type="PANTHER" id="PTHR42698">
    <property type="entry name" value="GTPASE ERA"/>
    <property type="match status" value="1"/>
</dbReference>
<dbReference type="PANTHER" id="PTHR42698:SF1">
    <property type="entry name" value="GTPASE ERA, MITOCHONDRIAL"/>
    <property type="match status" value="1"/>
</dbReference>
<dbReference type="Pfam" id="PF07650">
    <property type="entry name" value="KH_2"/>
    <property type="match status" value="1"/>
</dbReference>
<dbReference type="Pfam" id="PF01926">
    <property type="entry name" value="MMR_HSR1"/>
    <property type="match status" value="1"/>
</dbReference>
<dbReference type="SUPFAM" id="SSF52540">
    <property type="entry name" value="P-loop containing nucleoside triphosphate hydrolases"/>
    <property type="match status" value="1"/>
</dbReference>
<dbReference type="SUPFAM" id="SSF54814">
    <property type="entry name" value="Prokaryotic type KH domain (KH-domain type II)"/>
    <property type="match status" value="1"/>
</dbReference>
<dbReference type="PROSITE" id="PS51713">
    <property type="entry name" value="G_ERA"/>
    <property type="match status" value="1"/>
</dbReference>
<sequence>MAAPWLQRWRGAYAGPSGPLRLVRLHGVQRSSWRAAHAAAGAFGAGPHPGPPQRAANPGPGPHPPPVATSREKHARIVQGRPDQPAEPKVLRISIIGAPNSGKSTLSNQLLGRKVFPVSKKVHTTRCKARGVITHEDTQLIILDTPGLTSPMKAKRHKLEAAMLTDPWDSMKHADLVLVLVDVSDHWTRNSLSLEVLKCLSQFPHIPSVLVLNKVDLLKKKIILLGLINELTEGIVNGKKLKVRSEFEYNSSSPAKTVLKVTQTPPPENRARESPCQLETDKAQEGSSLDNSSDVKASESSLDTEAREQKPYKYGDQKNRKGWPHFQDIFMLAALNGEEVDTLKQYLLMQAKPGPWEFHSRVLTSQSPHEICDNIIREKILEYLPLEVPYGVTQVTELWEEGPSGELIIVQNLVVPRKSHKLMLIGRRGALISRIAQEAGQDLMNIFLCDIRLKLKVEVKS</sequence>
<gene>
    <name type="primary">ERAL1</name>
</gene>
<protein>
    <recommendedName>
        <fullName>GTPase Era, mitochondrial</fullName>
        <shortName>GdERA</shortName>
    </recommendedName>
    <alternativeName>
        <fullName>ERA-like protein 1</fullName>
    </alternativeName>
</protein>
<evidence type="ECO:0000250" key="1"/>
<evidence type="ECO:0000250" key="2">
    <source>
        <dbReference type="UniProtKB" id="O75616"/>
    </source>
</evidence>
<evidence type="ECO:0000250" key="3">
    <source>
        <dbReference type="UniProtKB" id="P06616"/>
    </source>
</evidence>
<evidence type="ECO:0000255" key="4"/>
<evidence type="ECO:0000255" key="5">
    <source>
        <dbReference type="PROSITE-ProRule" id="PRU01050"/>
    </source>
</evidence>
<evidence type="ECO:0000256" key="6">
    <source>
        <dbReference type="SAM" id="MobiDB-lite"/>
    </source>
</evidence>
<evidence type="ECO:0000305" key="7"/>
<keyword id="KW-0342">GTP-binding</keyword>
<keyword id="KW-0472">Membrane</keyword>
<keyword id="KW-0496">Mitochondrion</keyword>
<keyword id="KW-0999">Mitochondrion inner membrane</keyword>
<keyword id="KW-0547">Nucleotide-binding</keyword>
<keyword id="KW-1185">Reference proteome</keyword>
<keyword id="KW-0690">Ribosome biogenesis</keyword>
<keyword id="KW-0694">RNA-binding</keyword>
<keyword id="KW-0699">rRNA-binding</keyword>
<keyword id="KW-0809">Transit peptide</keyword>
<comment type="function">
    <text evidence="2">Probable GTPase that plays a role in the mitochondrial ribosomal small subunit assembly. Specifically binds the 12S mitochondrial rRNA (12S mt-rRNA) to a 33 nucleotide section delineating the 3' terminal stem-loop region. May act as a chaperone that protects the 12S mt-rRNA on the 28S mitoribosomal subunit during ribosomal small subunit assembly (By similarity).</text>
</comment>
<comment type="subcellular location">
    <subcellularLocation>
        <location evidence="1">Mitochondrion matrix</location>
    </subcellularLocation>
    <subcellularLocation>
        <location evidence="1">Mitochondrion inner membrane</location>
        <topology evidence="1">Peripheral membrane protein</topology>
    </subcellularLocation>
    <text evidence="1">Localizes on the matrix side on the mitochondrial inner membrane.</text>
</comment>
<comment type="similarity">
    <text evidence="5 7">Belongs to the TRAFAC class TrmE-Era-EngA-EngB-Septin-like GTPase superfamily. Era GTPase family.</text>
</comment>
<name>ERAL1_CHICK</name>